<name>IDI1_CAMAC</name>
<sequence length="235" mass="27016">MGDAATDAGMDAVQKRLMFEDKCILVDENDNVVGHDTKYNCHLMEKIESENLLHRAFSVFLFNSKYELLLQQRSATKVTFPLVWTNTCCSHPLYRESELIKENALGARNAAQRKLLDELGIPAEDVPVDQFIPLGRILYKAPSDGKWGEHELDYLLFIVRDVNVNPNPDEVADIKYVTRDQLKELLRKADAGEEGLKLSPWFRLVVDNFLFKWWDHVEKGTMHEAADMKSIHKLI</sequence>
<gene>
    <name type="primary">IPI1</name>
</gene>
<accession>O48964</accession>
<dbReference type="EC" id="5.3.3.2"/>
<dbReference type="EMBL" id="AF031079">
    <property type="protein sequence ID" value="AAB94132.1"/>
    <property type="molecule type" value="mRNA"/>
</dbReference>
<dbReference type="SMR" id="O48964"/>
<dbReference type="UniPathway" id="UPA00059">
    <property type="reaction ID" value="UER00104"/>
</dbReference>
<dbReference type="UniPathway" id="UPA00668"/>
<dbReference type="GO" id="GO:0005737">
    <property type="term" value="C:cytoplasm"/>
    <property type="evidence" value="ECO:0007669"/>
    <property type="project" value="TreeGrafter"/>
</dbReference>
<dbReference type="GO" id="GO:0004452">
    <property type="term" value="F:isopentenyl-diphosphate delta-isomerase activity"/>
    <property type="evidence" value="ECO:0007669"/>
    <property type="project" value="UniProtKB-EC"/>
</dbReference>
<dbReference type="GO" id="GO:0046872">
    <property type="term" value="F:metal ion binding"/>
    <property type="evidence" value="ECO:0007669"/>
    <property type="project" value="UniProtKB-KW"/>
</dbReference>
<dbReference type="GO" id="GO:0015995">
    <property type="term" value="P:chlorophyll biosynthetic process"/>
    <property type="evidence" value="ECO:0007669"/>
    <property type="project" value="UniProtKB-UniPathway"/>
</dbReference>
<dbReference type="GO" id="GO:0050992">
    <property type="term" value="P:dimethylallyl diphosphate biosynthetic process"/>
    <property type="evidence" value="ECO:0007669"/>
    <property type="project" value="UniProtKB-UniPathway"/>
</dbReference>
<dbReference type="GO" id="GO:0009240">
    <property type="term" value="P:isopentenyl diphosphate biosynthetic process"/>
    <property type="evidence" value="ECO:0007669"/>
    <property type="project" value="TreeGrafter"/>
</dbReference>
<dbReference type="GO" id="GO:0015979">
    <property type="term" value="P:photosynthesis"/>
    <property type="evidence" value="ECO:0007669"/>
    <property type="project" value="UniProtKB-KW"/>
</dbReference>
<dbReference type="CDD" id="cd02885">
    <property type="entry name" value="NUDIX_IPP_Isomerase"/>
    <property type="match status" value="1"/>
</dbReference>
<dbReference type="FunFam" id="3.90.79.10:FF:000025">
    <property type="entry name" value="isopentenyl-diphosphate Delta-isomerase I"/>
    <property type="match status" value="1"/>
</dbReference>
<dbReference type="Gene3D" id="3.90.79.10">
    <property type="entry name" value="Nucleoside Triphosphate Pyrophosphohydrolase"/>
    <property type="match status" value="1"/>
</dbReference>
<dbReference type="InterPro" id="IPR011876">
    <property type="entry name" value="IsopentenylPP_isomerase_typ1"/>
</dbReference>
<dbReference type="InterPro" id="IPR015797">
    <property type="entry name" value="NUDIX_hydrolase-like_dom_sf"/>
</dbReference>
<dbReference type="InterPro" id="IPR000086">
    <property type="entry name" value="NUDIX_hydrolase_dom"/>
</dbReference>
<dbReference type="NCBIfam" id="TIGR02150">
    <property type="entry name" value="IPP_isom_1"/>
    <property type="match status" value="1"/>
</dbReference>
<dbReference type="PANTHER" id="PTHR10885">
    <property type="entry name" value="ISOPENTENYL-DIPHOSPHATE DELTA-ISOMERASE"/>
    <property type="match status" value="1"/>
</dbReference>
<dbReference type="PANTHER" id="PTHR10885:SF17">
    <property type="entry name" value="ISOPENTENYL-DIPHOSPHATE DELTA-ISOMERASE I, CHLOROPLASTIC"/>
    <property type="match status" value="1"/>
</dbReference>
<dbReference type="Pfam" id="PF00293">
    <property type="entry name" value="NUDIX"/>
    <property type="match status" value="1"/>
</dbReference>
<dbReference type="PIRSF" id="PIRSF018427">
    <property type="entry name" value="Isopntndiph_ism"/>
    <property type="match status" value="1"/>
</dbReference>
<dbReference type="SUPFAM" id="SSF55811">
    <property type="entry name" value="Nudix"/>
    <property type="match status" value="1"/>
</dbReference>
<dbReference type="PROSITE" id="PS51462">
    <property type="entry name" value="NUDIX"/>
    <property type="match status" value="1"/>
</dbReference>
<protein>
    <recommendedName>
        <fullName>Isopentenyl-diphosphate Delta-isomerase I</fullName>
        <ecNumber>5.3.3.2</ecNumber>
    </recommendedName>
    <alternativeName>
        <fullName>Isopentenyl pyrophosphate isomerase I</fullName>
        <shortName>IPP isomerase I</shortName>
    </alternativeName>
</protein>
<proteinExistence type="evidence at transcript level"/>
<comment type="function">
    <text evidence="1">Catalyzes the 1,3-allylic rearrangement of the homoallylic substrate isopentenyl (IPP) to its highly electrophilic allylic isomer, dimethylallyl diphosphate (DMAPP).</text>
</comment>
<comment type="catalytic activity">
    <reaction>
        <text>isopentenyl diphosphate = dimethylallyl diphosphate</text>
        <dbReference type="Rhea" id="RHEA:23284"/>
        <dbReference type="ChEBI" id="CHEBI:57623"/>
        <dbReference type="ChEBI" id="CHEBI:128769"/>
        <dbReference type="EC" id="5.3.3.2"/>
    </reaction>
</comment>
<comment type="cofactor">
    <cofactor evidence="1">
        <name>Mg(2+)</name>
        <dbReference type="ChEBI" id="CHEBI:18420"/>
    </cofactor>
    <text evidence="1">Binds 1 Mg(2+) ion per subunit.</text>
</comment>
<comment type="pathway">
    <text>Isoprenoid biosynthesis; dimethylallyl diphosphate biosynthesis; dimethylallyl diphosphate from isopentenyl diphosphate: step 1/1.</text>
</comment>
<comment type="pathway">
    <text>Porphyrin-containing compound metabolism; chlorophyll biosynthesis.</text>
</comment>
<comment type="similarity">
    <text evidence="3">Belongs to the IPP isomerase type 1 family.</text>
</comment>
<organism>
    <name type="scientific">Camptotheca acuminata</name>
    <name type="common">Happy tree</name>
    <dbReference type="NCBI Taxonomy" id="16922"/>
    <lineage>
        <taxon>Eukaryota</taxon>
        <taxon>Viridiplantae</taxon>
        <taxon>Streptophyta</taxon>
        <taxon>Embryophyta</taxon>
        <taxon>Tracheophyta</taxon>
        <taxon>Spermatophyta</taxon>
        <taxon>Magnoliopsida</taxon>
        <taxon>eudicotyledons</taxon>
        <taxon>Gunneridae</taxon>
        <taxon>Pentapetalae</taxon>
        <taxon>asterids</taxon>
        <taxon>Cornales</taxon>
        <taxon>Nyssaceae</taxon>
        <taxon>Camptotheca</taxon>
    </lineage>
</organism>
<keyword id="KW-0149">Chlorophyll biosynthesis</keyword>
<keyword id="KW-0413">Isomerase</keyword>
<keyword id="KW-0414">Isoprene biosynthesis</keyword>
<keyword id="KW-0460">Magnesium</keyword>
<keyword id="KW-0479">Metal-binding</keyword>
<keyword id="KW-0602">Photosynthesis</keyword>
<evidence type="ECO:0000250" key="1"/>
<evidence type="ECO:0000255" key="2">
    <source>
        <dbReference type="PROSITE-ProRule" id="PRU00794"/>
    </source>
</evidence>
<evidence type="ECO:0000305" key="3"/>
<feature type="chain" id="PRO_0000205234" description="Isopentenyl-diphosphate Delta-isomerase I">
    <location>
        <begin position="1"/>
        <end position="235"/>
    </location>
</feature>
<feature type="domain" description="Nudix hydrolase" evidence="2">
    <location>
        <begin position="52"/>
        <end position="204"/>
    </location>
</feature>
<feature type="active site" evidence="1">
    <location>
        <position position="89"/>
    </location>
</feature>
<feature type="active site" evidence="1">
    <location>
        <position position="151"/>
    </location>
</feature>
<feature type="binding site" evidence="1">
    <location>
        <position position="38"/>
    </location>
    <ligand>
        <name>substrate</name>
    </ligand>
</feature>
<feature type="binding site" evidence="1">
    <location>
        <position position="42"/>
    </location>
    <ligand>
        <name>Mg(2+)</name>
        <dbReference type="ChEBI" id="CHEBI:18420"/>
    </ligand>
</feature>
<feature type="binding site" evidence="1">
    <location>
        <position position="54"/>
    </location>
    <ligand>
        <name>Mg(2+)</name>
        <dbReference type="ChEBI" id="CHEBI:18420"/>
    </ligand>
</feature>
<feature type="binding site" evidence="1">
    <location>
        <position position="73"/>
    </location>
    <ligand>
        <name>substrate</name>
    </ligand>
</feature>
<feature type="binding site" evidence="1">
    <location>
        <position position="77"/>
    </location>
    <ligand>
        <name>substrate</name>
    </ligand>
</feature>
<feature type="binding site" evidence="1">
    <location>
        <position position="90"/>
    </location>
    <ligand>
        <name>substrate</name>
    </ligand>
</feature>
<feature type="binding site" evidence="1">
    <location>
        <position position="149"/>
    </location>
    <ligand>
        <name>Mg(2+)</name>
        <dbReference type="ChEBI" id="CHEBI:18420"/>
    </ligand>
</feature>
<feature type="binding site" evidence="1">
    <location>
        <position position="151"/>
    </location>
    <ligand>
        <name>Mg(2+)</name>
        <dbReference type="ChEBI" id="CHEBI:18420"/>
    </ligand>
</feature>
<reference key="1">
    <citation type="submission" date="1997-10" db="EMBL/GenBank/DDBJ databases">
        <title>Isolation and characterization of two genes from Camptotheca acuminata that encode isopentenyl diphosphate isomerase.</title>
        <authorList>
            <person name="Jung K.-H."/>
            <person name="Christensen D.J."/>
            <person name="Scott A.I."/>
        </authorList>
    </citation>
    <scope>NUCLEOTIDE SEQUENCE [MRNA]</scope>
</reference>